<dbReference type="EC" id="5.3.1.9" evidence="1"/>
<dbReference type="EMBL" id="CP001068">
    <property type="protein sequence ID" value="ACD26997.1"/>
    <property type="molecule type" value="Genomic_DNA"/>
</dbReference>
<dbReference type="SMR" id="B2UF65"/>
<dbReference type="STRING" id="402626.Rpic_1861"/>
<dbReference type="KEGG" id="rpi:Rpic_1861"/>
<dbReference type="PATRIC" id="fig|402626.5.peg.3013"/>
<dbReference type="eggNOG" id="COG0166">
    <property type="taxonomic scope" value="Bacteria"/>
</dbReference>
<dbReference type="HOGENOM" id="CLU_017947_3_1_4"/>
<dbReference type="UniPathway" id="UPA00109">
    <property type="reaction ID" value="UER00181"/>
</dbReference>
<dbReference type="UniPathway" id="UPA00138"/>
<dbReference type="GO" id="GO:0005829">
    <property type="term" value="C:cytosol"/>
    <property type="evidence" value="ECO:0007669"/>
    <property type="project" value="TreeGrafter"/>
</dbReference>
<dbReference type="GO" id="GO:0097367">
    <property type="term" value="F:carbohydrate derivative binding"/>
    <property type="evidence" value="ECO:0007669"/>
    <property type="project" value="InterPro"/>
</dbReference>
<dbReference type="GO" id="GO:0004347">
    <property type="term" value="F:glucose-6-phosphate isomerase activity"/>
    <property type="evidence" value="ECO:0007669"/>
    <property type="project" value="UniProtKB-UniRule"/>
</dbReference>
<dbReference type="GO" id="GO:0048029">
    <property type="term" value="F:monosaccharide binding"/>
    <property type="evidence" value="ECO:0007669"/>
    <property type="project" value="TreeGrafter"/>
</dbReference>
<dbReference type="GO" id="GO:0006094">
    <property type="term" value="P:gluconeogenesis"/>
    <property type="evidence" value="ECO:0007669"/>
    <property type="project" value="UniProtKB-UniRule"/>
</dbReference>
<dbReference type="GO" id="GO:0051156">
    <property type="term" value="P:glucose 6-phosphate metabolic process"/>
    <property type="evidence" value="ECO:0007669"/>
    <property type="project" value="TreeGrafter"/>
</dbReference>
<dbReference type="GO" id="GO:0006096">
    <property type="term" value="P:glycolytic process"/>
    <property type="evidence" value="ECO:0007669"/>
    <property type="project" value="UniProtKB-UniRule"/>
</dbReference>
<dbReference type="CDD" id="cd05015">
    <property type="entry name" value="SIS_PGI_1"/>
    <property type="match status" value="1"/>
</dbReference>
<dbReference type="CDD" id="cd05016">
    <property type="entry name" value="SIS_PGI_2"/>
    <property type="match status" value="1"/>
</dbReference>
<dbReference type="FunFam" id="3.40.50.10490:FF:000018">
    <property type="entry name" value="Glucose-6-phosphate isomerase"/>
    <property type="match status" value="1"/>
</dbReference>
<dbReference type="Gene3D" id="1.10.1390.10">
    <property type="match status" value="1"/>
</dbReference>
<dbReference type="Gene3D" id="3.40.50.10490">
    <property type="entry name" value="Glucose-6-phosphate isomerase like protein, domain 1"/>
    <property type="match status" value="2"/>
</dbReference>
<dbReference type="HAMAP" id="MF_00473">
    <property type="entry name" value="G6P_isomerase"/>
    <property type="match status" value="1"/>
</dbReference>
<dbReference type="InterPro" id="IPR001672">
    <property type="entry name" value="G6P_Isomerase"/>
</dbReference>
<dbReference type="InterPro" id="IPR023096">
    <property type="entry name" value="G6P_Isomerase_C"/>
</dbReference>
<dbReference type="InterPro" id="IPR018189">
    <property type="entry name" value="Phosphoglucose_isomerase_CS"/>
</dbReference>
<dbReference type="InterPro" id="IPR046348">
    <property type="entry name" value="SIS_dom_sf"/>
</dbReference>
<dbReference type="InterPro" id="IPR035476">
    <property type="entry name" value="SIS_PGI_1"/>
</dbReference>
<dbReference type="InterPro" id="IPR035482">
    <property type="entry name" value="SIS_PGI_2"/>
</dbReference>
<dbReference type="NCBIfam" id="NF001211">
    <property type="entry name" value="PRK00179.1"/>
    <property type="match status" value="1"/>
</dbReference>
<dbReference type="PANTHER" id="PTHR11469">
    <property type="entry name" value="GLUCOSE-6-PHOSPHATE ISOMERASE"/>
    <property type="match status" value="1"/>
</dbReference>
<dbReference type="PANTHER" id="PTHR11469:SF1">
    <property type="entry name" value="GLUCOSE-6-PHOSPHATE ISOMERASE"/>
    <property type="match status" value="1"/>
</dbReference>
<dbReference type="Pfam" id="PF00342">
    <property type="entry name" value="PGI"/>
    <property type="match status" value="1"/>
</dbReference>
<dbReference type="PRINTS" id="PR00662">
    <property type="entry name" value="G6PISOMERASE"/>
</dbReference>
<dbReference type="SUPFAM" id="SSF53697">
    <property type="entry name" value="SIS domain"/>
    <property type="match status" value="1"/>
</dbReference>
<dbReference type="PROSITE" id="PS00765">
    <property type="entry name" value="P_GLUCOSE_ISOMERASE_1"/>
    <property type="match status" value="1"/>
</dbReference>
<dbReference type="PROSITE" id="PS00174">
    <property type="entry name" value="P_GLUCOSE_ISOMERASE_2"/>
    <property type="match status" value="1"/>
</dbReference>
<dbReference type="PROSITE" id="PS51463">
    <property type="entry name" value="P_GLUCOSE_ISOMERASE_3"/>
    <property type="match status" value="1"/>
</dbReference>
<sequence length="539" mass="59060">MPTALPAWQSLTQHAESIRATHMRDWFAAPDAEERVRAFTLEAAGLTVDYSKNRITPDTLSQLLQLAEEAGVLTLRDAMLRGERINNTEHRAVLHVALRGRAEHDYRADGEPVMPEVLRVRAQMRDFANRVHSGAWTGHSGRRITDVVNIGIGGSDLGPRMVCRALDHLAVPQVRVHFVSNVDGTDLAETLDHLNPDTTLAIVCSKTFTTLETMANAHSMRRWFVDHGVAESQLKHHFVAVSTNREAVVQFGIDPDNMFTFWDWVGGRFSLWSAVGLSIVLAIGPQQFEAMLDGARAMDRHFATAAPRENLPLILGMLSVWYRGFFDAASACTVPYCAPLELLTDFMQQLEMESNGKSVQRNGAAIDTDTGPIVWGTAGTNGQHAYFQLIHQGSQIVPVDFITTLEPVRNLPGHHAKLLANCFAQGEALLLGRTAEEVRAGGVTDEALVPHMVFEGNRPSTTILMERLDAASLGALIACAEHRTFVQGAVWNINSFDQWGVELGKKLAKPIQAELEGAPASVAHDASTVALIRRAKAAL</sequence>
<reference key="1">
    <citation type="submission" date="2008-05" db="EMBL/GenBank/DDBJ databases">
        <title>Complete sequence of chromosome 1 of Ralstonia pickettii 12J.</title>
        <authorList>
            <person name="Lucas S."/>
            <person name="Copeland A."/>
            <person name="Lapidus A."/>
            <person name="Glavina del Rio T."/>
            <person name="Dalin E."/>
            <person name="Tice H."/>
            <person name="Bruce D."/>
            <person name="Goodwin L."/>
            <person name="Pitluck S."/>
            <person name="Meincke L."/>
            <person name="Brettin T."/>
            <person name="Detter J.C."/>
            <person name="Han C."/>
            <person name="Kuske C.R."/>
            <person name="Schmutz J."/>
            <person name="Larimer F."/>
            <person name="Land M."/>
            <person name="Hauser L."/>
            <person name="Kyrpides N."/>
            <person name="Mikhailova N."/>
            <person name="Marsh T."/>
            <person name="Richardson P."/>
        </authorList>
    </citation>
    <scope>NUCLEOTIDE SEQUENCE [LARGE SCALE GENOMIC DNA]</scope>
    <source>
        <strain>12J</strain>
    </source>
</reference>
<keyword id="KW-0963">Cytoplasm</keyword>
<keyword id="KW-0312">Gluconeogenesis</keyword>
<keyword id="KW-0324">Glycolysis</keyword>
<keyword id="KW-0413">Isomerase</keyword>
<evidence type="ECO:0000255" key="1">
    <source>
        <dbReference type="HAMAP-Rule" id="MF_00473"/>
    </source>
</evidence>
<name>G6PI_RALPJ</name>
<feature type="chain" id="PRO_1000125747" description="Glucose-6-phosphate isomerase">
    <location>
        <begin position="1"/>
        <end position="539"/>
    </location>
</feature>
<feature type="active site" description="Proton donor" evidence="1">
    <location>
        <position position="353"/>
    </location>
</feature>
<feature type="active site" evidence="1">
    <location>
        <position position="384"/>
    </location>
</feature>
<feature type="active site" evidence="1">
    <location>
        <position position="505"/>
    </location>
</feature>
<comment type="function">
    <text evidence="1">Catalyzes the reversible isomerization of glucose-6-phosphate to fructose-6-phosphate.</text>
</comment>
<comment type="catalytic activity">
    <reaction evidence="1">
        <text>alpha-D-glucose 6-phosphate = beta-D-fructose 6-phosphate</text>
        <dbReference type="Rhea" id="RHEA:11816"/>
        <dbReference type="ChEBI" id="CHEBI:57634"/>
        <dbReference type="ChEBI" id="CHEBI:58225"/>
        <dbReference type="EC" id="5.3.1.9"/>
    </reaction>
</comment>
<comment type="pathway">
    <text evidence="1">Carbohydrate biosynthesis; gluconeogenesis.</text>
</comment>
<comment type="pathway">
    <text evidence="1">Carbohydrate degradation; glycolysis; D-glyceraldehyde 3-phosphate and glycerone phosphate from D-glucose: step 2/4.</text>
</comment>
<comment type="subcellular location">
    <subcellularLocation>
        <location evidence="1">Cytoplasm</location>
    </subcellularLocation>
</comment>
<comment type="similarity">
    <text evidence="1">Belongs to the GPI family.</text>
</comment>
<proteinExistence type="inferred from homology"/>
<organism>
    <name type="scientific">Ralstonia pickettii (strain 12J)</name>
    <dbReference type="NCBI Taxonomy" id="402626"/>
    <lineage>
        <taxon>Bacteria</taxon>
        <taxon>Pseudomonadati</taxon>
        <taxon>Pseudomonadota</taxon>
        <taxon>Betaproteobacteria</taxon>
        <taxon>Burkholderiales</taxon>
        <taxon>Burkholderiaceae</taxon>
        <taxon>Ralstonia</taxon>
    </lineage>
</organism>
<protein>
    <recommendedName>
        <fullName evidence="1">Glucose-6-phosphate isomerase</fullName>
        <shortName evidence="1">GPI</shortName>
        <ecNumber evidence="1">5.3.1.9</ecNumber>
    </recommendedName>
    <alternativeName>
        <fullName evidence="1">Phosphoglucose isomerase</fullName>
        <shortName evidence="1">PGI</shortName>
    </alternativeName>
    <alternativeName>
        <fullName evidence="1">Phosphohexose isomerase</fullName>
        <shortName evidence="1">PHI</shortName>
    </alternativeName>
</protein>
<accession>B2UF65</accession>
<gene>
    <name evidence="1" type="primary">pgi</name>
    <name type="ordered locus">Rpic_1861</name>
</gene>